<name>PPTA_ECO27</name>
<reference key="1">
    <citation type="journal article" date="2009" name="J. Bacteriol.">
        <title>Complete genome sequence and comparative genome analysis of enteropathogenic Escherichia coli O127:H6 strain E2348/69.</title>
        <authorList>
            <person name="Iguchi A."/>
            <person name="Thomson N.R."/>
            <person name="Ogura Y."/>
            <person name="Saunders D."/>
            <person name="Ooka T."/>
            <person name="Henderson I.R."/>
            <person name="Harris D."/>
            <person name="Asadulghani M."/>
            <person name="Kurokawa K."/>
            <person name="Dean P."/>
            <person name="Kenny B."/>
            <person name="Quail M.A."/>
            <person name="Thurston S."/>
            <person name="Dougan G."/>
            <person name="Hayashi T."/>
            <person name="Parkhill J."/>
            <person name="Frankel G."/>
        </authorList>
    </citation>
    <scope>NUCLEOTIDE SEQUENCE [LARGE SCALE GENOMIC DNA]</scope>
    <source>
        <strain>E2348/69 / EPEC</strain>
    </source>
</reference>
<sequence length="75" mass="8504">MPHIDIKCFPRELDEQQKAALAADITDVIIRHLNSKDSSISISLQQIQPESWQAIWDAEIAPQMEALIKKPGYSM</sequence>
<accession>B7URK1</accession>
<feature type="initiator methionine" description="Removed" evidence="1">
    <location>
        <position position="1"/>
    </location>
</feature>
<feature type="chain" id="PRO_1000201579" description="Tautomerase PptA">
    <location>
        <begin position="2"/>
        <end position="75"/>
    </location>
</feature>
<feature type="active site" description="Proton acceptor; via imino nitrogen" evidence="1">
    <location>
        <position position="2"/>
    </location>
</feature>
<proteinExistence type="inferred from homology"/>
<dbReference type="EC" id="5.3.2.-" evidence="1"/>
<dbReference type="EMBL" id="FM180568">
    <property type="protein sequence ID" value="CAS09146.1"/>
    <property type="molecule type" value="Genomic_DNA"/>
</dbReference>
<dbReference type="RefSeq" id="WP_001120147.1">
    <property type="nucleotide sequence ID" value="NC_011601.1"/>
</dbReference>
<dbReference type="SMR" id="B7URK1"/>
<dbReference type="GeneID" id="75171546"/>
<dbReference type="KEGG" id="ecg:E2348C_1598"/>
<dbReference type="HOGENOM" id="CLU_183611_0_1_6"/>
<dbReference type="Proteomes" id="UP000008205">
    <property type="component" value="Chromosome"/>
</dbReference>
<dbReference type="GO" id="GO:0005737">
    <property type="term" value="C:cytoplasm"/>
    <property type="evidence" value="ECO:0007669"/>
    <property type="project" value="UniProtKB-SubCell"/>
</dbReference>
<dbReference type="GO" id="GO:0016862">
    <property type="term" value="F:intramolecular oxidoreductase activity, interconverting keto- and enol-groups"/>
    <property type="evidence" value="ECO:0007669"/>
    <property type="project" value="UniProtKB-UniRule"/>
</dbReference>
<dbReference type="Gene3D" id="3.30.429.10">
    <property type="entry name" value="Macrophage Migration Inhibitory Factor"/>
    <property type="match status" value="1"/>
</dbReference>
<dbReference type="HAMAP" id="MF_00718">
    <property type="entry name" value="Tautomerase_PptA"/>
    <property type="match status" value="1"/>
</dbReference>
<dbReference type="InterPro" id="IPR004370">
    <property type="entry name" value="4-OT-like_dom"/>
</dbReference>
<dbReference type="InterPro" id="IPR014347">
    <property type="entry name" value="Tautomerase/MIF_sf"/>
</dbReference>
<dbReference type="InterPro" id="IPR017284">
    <property type="entry name" value="Tautomerase_PptA"/>
</dbReference>
<dbReference type="NCBIfam" id="NF002324">
    <property type="entry name" value="PRK01271.1"/>
    <property type="match status" value="1"/>
</dbReference>
<dbReference type="Pfam" id="PF01361">
    <property type="entry name" value="Tautomerase"/>
    <property type="match status" value="1"/>
</dbReference>
<dbReference type="PIRSF" id="PIRSF037799">
    <property type="entry name" value="Tautomer_YdcE_prd"/>
    <property type="match status" value="1"/>
</dbReference>
<dbReference type="SUPFAM" id="SSF55331">
    <property type="entry name" value="Tautomerase/MIF"/>
    <property type="match status" value="1"/>
</dbReference>
<gene>
    <name evidence="1" type="primary">pptA</name>
    <name type="ordered locus">E2348C_1598</name>
</gene>
<keyword id="KW-0963">Cytoplasm</keyword>
<keyword id="KW-0413">Isomerase</keyword>
<keyword id="KW-1185">Reference proteome</keyword>
<organism>
    <name type="scientific">Escherichia coli O127:H6 (strain E2348/69 / EPEC)</name>
    <dbReference type="NCBI Taxonomy" id="574521"/>
    <lineage>
        <taxon>Bacteria</taxon>
        <taxon>Pseudomonadati</taxon>
        <taxon>Pseudomonadota</taxon>
        <taxon>Gammaproteobacteria</taxon>
        <taxon>Enterobacterales</taxon>
        <taxon>Enterobacteriaceae</taxon>
        <taxon>Escherichia</taxon>
    </lineage>
</organism>
<protein>
    <recommendedName>
        <fullName evidence="1">Tautomerase PptA</fullName>
        <ecNumber evidence="1">5.3.2.-</ecNumber>
    </recommendedName>
</protein>
<evidence type="ECO:0000255" key="1">
    <source>
        <dbReference type="HAMAP-Rule" id="MF_00718"/>
    </source>
</evidence>
<comment type="subunit">
    <text evidence="1">Homodimer.</text>
</comment>
<comment type="subcellular location">
    <subcellularLocation>
        <location evidence="1">Cytoplasm</location>
    </subcellularLocation>
</comment>
<comment type="similarity">
    <text evidence="1">Belongs to the 4-oxalocrotonate tautomerase family. PptA subfamily.</text>
</comment>